<evidence type="ECO:0000255" key="1">
    <source>
        <dbReference type="HAMAP-Rule" id="MF_00564"/>
    </source>
</evidence>
<dbReference type="EC" id="2.7.7.56" evidence="1"/>
<dbReference type="EMBL" id="CP000656">
    <property type="protein sequence ID" value="ABP44836.1"/>
    <property type="molecule type" value="Genomic_DNA"/>
</dbReference>
<dbReference type="SMR" id="A4T8F7"/>
<dbReference type="STRING" id="350054.Mflv_2358"/>
<dbReference type="KEGG" id="mgi:Mflv_2358"/>
<dbReference type="eggNOG" id="COG0689">
    <property type="taxonomic scope" value="Bacteria"/>
</dbReference>
<dbReference type="HOGENOM" id="CLU_050858_0_0_11"/>
<dbReference type="OrthoDB" id="9802265at2"/>
<dbReference type="GO" id="GO:0000175">
    <property type="term" value="F:3'-5'-RNA exonuclease activity"/>
    <property type="evidence" value="ECO:0007669"/>
    <property type="project" value="UniProtKB-UniRule"/>
</dbReference>
<dbReference type="GO" id="GO:0000049">
    <property type="term" value="F:tRNA binding"/>
    <property type="evidence" value="ECO:0007669"/>
    <property type="project" value="UniProtKB-UniRule"/>
</dbReference>
<dbReference type="GO" id="GO:0009022">
    <property type="term" value="F:tRNA nucleotidyltransferase activity"/>
    <property type="evidence" value="ECO:0007669"/>
    <property type="project" value="UniProtKB-UniRule"/>
</dbReference>
<dbReference type="GO" id="GO:0016075">
    <property type="term" value="P:rRNA catabolic process"/>
    <property type="evidence" value="ECO:0007669"/>
    <property type="project" value="UniProtKB-UniRule"/>
</dbReference>
<dbReference type="GO" id="GO:0006364">
    <property type="term" value="P:rRNA processing"/>
    <property type="evidence" value="ECO:0007669"/>
    <property type="project" value="UniProtKB-KW"/>
</dbReference>
<dbReference type="GO" id="GO:0008033">
    <property type="term" value="P:tRNA processing"/>
    <property type="evidence" value="ECO:0007669"/>
    <property type="project" value="UniProtKB-UniRule"/>
</dbReference>
<dbReference type="CDD" id="cd11362">
    <property type="entry name" value="RNase_PH_bact"/>
    <property type="match status" value="1"/>
</dbReference>
<dbReference type="FunFam" id="3.30.230.70:FF:000003">
    <property type="entry name" value="Ribonuclease PH"/>
    <property type="match status" value="1"/>
</dbReference>
<dbReference type="Gene3D" id="3.30.230.70">
    <property type="entry name" value="GHMP Kinase, N-terminal domain"/>
    <property type="match status" value="1"/>
</dbReference>
<dbReference type="HAMAP" id="MF_00564">
    <property type="entry name" value="RNase_PH"/>
    <property type="match status" value="1"/>
</dbReference>
<dbReference type="InterPro" id="IPR001247">
    <property type="entry name" value="ExoRNase_PH_dom1"/>
</dbReference>
<dbReference type="InterPro" id="IPR015847">
    <property type="entry name" value="ExoRNase_PH_dom2"/>
</dbReference>
<dbReference type="InterPro" id="IPR036345">
    <property type="entry name" value="ExoRNase_PH_dom2_sf"/>
</dbReference>
<dbReference type="InterPro" id="IPR027408">
    <property type="entry name" value="PNPase/RNase_PH_dom_sf"/>
</dbReference>
<dbReference type="InterPro" id="IPR020568">
    <property type="entry name" value="Ribosomal_Su5_D2-typ_SF"/>
</dbReference>
<dbReference type="InterPro" id="IPR050080">
    <property type="entry name" value="RNase_PH"/>
</dbReference>
<dbReference type="InterPro" id="IPR002381">
    <property type="entry name" value="RNase_PH_bac-type"/>
</dbReference>
<dbReference type="InterPro" id="IPR018336">
    <property type="entry name" value="RNase_PH_CS"/>
</dbReference>
<dbReference type="NCBIfam" id="TIGR01966">
    <property type="entry name" value="RNasePH"/>
    <property type="match status" value="1"/>
</dbReference>
<dbReference type="PANTHER" id="PTHR11953">
    <property type="entry name" value="EXOSOME COMPLEX COMPONENT"/>
    <property type="match status" value="1"/>
</dbReference>
<dbReference type="PANTHER" id="PTHR11953:SF0">
    <property type="entry name" value="EXOSOME COMPLEX COMPONENT RRP41"/>
    <property type="match status" value="1"/>
</dbReference>
<dbReference type="Pfam" id="PF01138">
    <property type="entry name" value="RNase_PH"/>
    <property type="match status" value="1"/>
</dbReference>
<dbReference type="Pfam" id="PF03725">
    <property type="entry name" value="RNase_PH_C"/>
    <property type="match status" value="1"/>
</dbReference>
<dbReference type="SUPFAM" id="SSF55666">
    <property type="entry name" value="Ribonuclease PH domain 2-like"/>
    <property type="match status" value="1"/>
</dbReference>
<dbReference type="SUPFAM" id="SSF54211">
    <property type="entry name" value="Ribosomal protein S5 domain 2-like"/>
    <property type="match status" value="1"/>
</dbReference>
<dbReference type="PROSITE" id="PS01277">
    <property type="entry name" value="RIBONUCLEASE_PH"/>
    <property type="match status" value="1"/>
</dbReference>
<accession>A4T8F7</accession>
<feature type="chain" id="PRO_1000082296" description="Ribonuclease PH">
    <location>
        <begin position="1"/>
        <end position="260"/>
    </location>
</feature>
<feature type="binding site" evidence="1">
    <location>
        <position position="88"/>
    </location>
    <ligand>
        <name>phosphate</name>
        <dbReference type="ChEBI" id="CHEBI:43474"/>
        <note>substrate</note>
    </ligand>
</feature>
<feature type="binding site" evidence="1">
    <location>
        <begin position="126"/>
        <end position="128"/>
    </location>
    <ligand>
        <name>phosphate</name>
        <dbReference type="ChEBI" id="CHEBI:43474"/>
        <note>substrate</note>
    </ligand>
</feature>
<sequence length="260" mass="27489">MSRREDGRLDDELRPVTITRGFTTHPAGSVLVEFGETRVMCTASVTEGVPRWRKGSGQGWLTAEYAMLPAATHDRSDRESVKGRVGGRTQEISRLVGRSLRACIDLAALGENTIAIDCDVLQADGGTRTAAITGAFVALSDAVTYLGAAGKLSDPRPLSCAIAAVSVGVVDGRVRVDLPYTEDSRAEVDMNVVATDTGTLVEIQGTGEGATFPRSTLDKMLDAAMAACDQLFEIQRAALELPYPGTLPESAEPAKKAFGS</sequence>
<proteinExistence type="inferred from homology"/>
<organism>
    <name type="scientific">Mycolicibacterium gilvum (strain PYR-GCK)</name>
    <name type="common">Mycobacterium gilvum (strain PYR-GCK)</name>
    <dbReference type="NCBI Taxonomy" id="350054"/>
    <lineage>
        <taxon>Bacteria</taxon>
        <taxon>Bacillati</taxon>
        <taxon>Actinomycetota</taxon>
        <taxon>Actinomycetes</taxon>
        <taxon>Mycobacteriales</taxon>
        <taxon>Mycobacteriaceae</taxon>
        <taxon>Mycolicibacterium</taxon>
    </lineage>
</organism>
<comment type="function">
    <text evidence="1">Phosphorolytic 3'-5' exoribonuclease that plays an important role in tRNA 3'-end maturation. Removes nucleotide residues following the 3'-CCA terminus of tRNAs; can also add nucleotides to the ends of RNA molecules by using nucleoside diphosphates as substrates, but this may not be physiologically important. Probably plays a role in initiation of 16S rRNA degradation (leading to ribosome degradation) during starvation.</text>
</comment>
<comment type="catalytic activity">
    <reaction evidence="1">
        <text>tRNA(n+1) + phosphate = tRNA(n) + a ribonucleoside 5'-diphosphate</text>
        <dbReference type="Rhea" id="RHEA:10628"/>
        <dbReference type="Rhea" id="RHEA-COMP:17343"/>
        <dbReference type="Rhea" id="RHEA-COMP:17344"/>
        <dbReference type="ChEBI" id="CHEBI:43474"/>
        <dbReference type="ChEBI" id="CHEBI:57930"/>
        <dbReference type="ChEBI" id="CHEBI:173114"/>
        <dbReference type="EC" id="2.7.7.56"/>
    </reaction>
</comment>
<comment type="subunit">
    <text evidence="1">Homohexameric ring arranged as a trimer of dimers.</text>
</comment>
<comment type="similarity">
    <text evidence="1">Belongs to the RNase PH family.</text>
</comment>
<protein>
    <recommendedName>
        <fullName evidence="1">Ribonuclease PH</fullName>
        <shortName evidence="1">RNase PH</shortName>
        <ecNumber evidence="1">2.7.7.56</ecNumber>
    </recommendedName>
    <alternativeName>
        <fullName evidence="1">tRNA nucleotidyltransferase</fullName>
    </alternativeName>
</protein>
<reference key="1">
    <citation type="submission" date="2007-04" db="EMBL/GenBank/DDBJ databases">
        <title>Complete sequence of chromosome of Mycobacterium gilvum PYR-GCK.</title>
        <authorList>
            <consortium name="US DOE Joint Genome Institute"/>
            <person name="Copeland A."/>
            <person name="Lucas S."/>
            <person name="Lapidus A."/>
            <person name="Barry K."/>
            <person name="Detter J.C."/>
            <person name="Glavina del Rio T."/>
            <person name="Hammon N."/>
            <person name="Israni S."/>
            <person name="Dalin E."/>
            <person name="Tice H."/>
            <person name="Pitluck S."/>
            <person name="Chain P."/>
            <person name="Malfatti S."/>
            <person name="Shin M."/>
            <person name="Vergez L."/>
            <person name="Schmutz J."/>
            <person name="Larimer F."/>
            <person name="Land M."/>
            <person name="Hauser L."/>
            <person name="Kyrpides N."/>
            <person name="Mikhailova N."/>
            <person name="Miller C."/>
            <person name="Richardson P."/>
        </authorList>
    </citation>
    <scope>NUCLEOTIDE SEQUENCE [LARGE SCALE GENOMIC DNA]</scope>
    <source>
        <strain>PYR-GCK</strain>
    </source>
</reference>
<name>RNPH_MYCGI</name>
<gene>
    <name evidence="1" type="primary">rph</name>
    <name type="ordered locus">Mflv_2358</name>
</gene>
<keyword id="KW-0548">Nucleotidyltransferase</keyword>
<keyword id="KW-0694">RNA-binding</keyword>
<keyword id="KW-0698">rRNA processing</keyword>
<keyword id="KW-0808">Transferase</keyword>
<keyword id="KW-0819">tRNA processing</keyword>
<keyword id="KW-0820">tRNA-binding</keyword>